<evidence type="ECO:0000250" key="1"/>
<evidence type="ECO:0000255" key="2"/>
<evidence type="ECO:0000269" key="3">
    <source>
    </source>
</evidence>
<evidence type="ECO:0000269" key="4">
    <source>
    </source>
</evidence>
<evidence type="ECO:0000305" key="5"/>
<dbReference type="EMBL" id="X52274">
    <property type="protein sequence ID" value="CAA36517.1"/>
    <property type="molecule type" value="mRNA"/>
</dbReference>
<dbReference type="EMBL" id="X53583">
    <property type="protein sequence ID" value="CAA37652.1"/>
    <property type="molecule type" value="mRNA"/>
</dbReference>
<dbReference type="EMBL" id="AE014297">
    <property type="protein sequence ID" value="AAF56302.2"/>
    <property type="molecule type" value="Genomic_DNA"/>
</dbReference>
<dbReference type="EMBL" id="AY058446">
    <property type="protein sequence ID" value="AAL13675.1"/>
    <property type="molecule type" value="mRNA"/>
</dbReference>
<dbReference type="PIR" id="S11679">
    <property type="entry name" value="ACFFA2"/>
</dbReference>
<dbReference type="RefSeq" id="NP_524482.1">
    <property type="nucleotide sequence ID" value="NM_079758.3"/>
</dbReference>
<dbReference type="RefSeq" id="NP_733001.1">
    <property type="nucleotide sequence ID" value="NM_170146.2"/>
</dbReference>
<dbReference type="SMR" id="P17644"/>
<dbReference type="BioGRID" id="67845">
    <property type="interactions" value="4"/>
</dbReference>
<dbReference type="DIP" id="DIP-22674N"/>
<dbReference type="FunCoup" id="P17644">
    <property type="interactions" value="51"/>
</dbReference>
<dbReference type="IntAct" id="P17644">
    <property type="interactions" value="1"/>
</dbReference>
<dbReference type="STRING" id="7227.FBpp0084023"/>
<dbReference type="ChEMBL" id="CHEMBL3350223"/>
<dbReference type="GlyCosmos" id="P17644">
    <property type="glycosylation" value="3 sites, No reported glycans"/>
</dbReference>
<dbReference type="GlyGen" id="P17644">
    <property type="glycosylation" value="3 sites"/>
</dbReference>
<dbReference type="PaxDb" id="7227-FBpp0084023"/>
<dbReference type="DNASU" id="42919"/>
<dbReference type="EnsemblMetazoa" id="FBtr0084639">
    <property type="protein sequence ID" value="FBpp0084023"/>
    <property type="gene ID" value="FBgn0000039"/>
</dbReference>
<dbReference type="EnsemblMetazoa" id="FBtr0084640">
    <property type="protein sequence ID" value="FBpp0084024"/>
    <property type="gene ID" value="FBgn0000039"/>
</dbReference>
<dbReference type="GeneID" id="42919"/>
<dbReference type="KEGG" id="dme:Dmel_CG6844"/>
<dbReference type="AGR" id="FB:FBgn0000039"/>
<dbReference type="CTD" id="42919"/>
<dbReference type="FlyBase" id="FBgn0000039">
    <property type="gene designation" value="nAChRalpha2"/>
</dbReference>
<dbReference type="VEuPathDB" id="VectorBase:FBgn0000039"/>
<dbReference type="eggNOG" id="KOG3645">
    <property type="taxonomic scope" value="Eukaryota"/>
</dbReference>
<dbReference type="HOGENOM" id="CLU_018074_1_1_1"/>
<dbReference type="InParanoid" id="P17644"/>
<dbReference type="OMA" id="DHKFQWD"/>
<dbReference type="OrthoDB" id="5975154at2759"/>
<dbReference type="PhylomeDB" id="P17644"/>
<dbReference type="Reactome" id="R-DME-629587">
    <property type="pathway name" value="Highly sodium permeable postsynaptic acetylcholine nicotinic receptors"/>
</dbReference>
<dbReference type="Reactome" id="R-DME-629594">
    <property type="pathway name" value="Highly calcium permeable postsynaptic nicotinic acetylcholine receptors"/>
</dbReference>
<dbReference type="Reactome" id="R-DME-629597">
    <property type="pathway name" value="Highly calcium permeable nicotinic acetylcholine receptors"/>
</dbReference>
<dbReference type="Reactome" id="R-DME-6798695">
    <property type="pathway name" value="Neutrophil degranulation"/>
</dbReference>
<dbReference type="BioGRID-ORCS" id="42919">
    <property type="hits" value="0 hits in 3 CRISPR screens"/>
</dbReference>
<dbReference type="GenomeRNAi" id="42919"/>
<dbReference type="PRO" id="PR:P17644"/>
<dbReference type="Proteomes" id="UP000000803">
    <property type="component" value="Chromosome 3R"/>
</dbReference>
<dbReference type="Bgee" id="FBgn0000039">
    <property type="expression patterns" value="Expressed in lamina wide-field cell (Drosophila) in brain and 83 other cell types or tissues"/>
</dbReference>
<dbReference type="GO" id="GO:0005892">
    <property type="term" value="C:acetylcholine-gated channel complex"/>
    <property type="evidence" value="ECO:0000314"/>
    <property type="project" value="FlyBase"/>
</dbReference>
<dbReference type="GO" id="GO:0043005">
    <property type="term" value="C:neuron projection"/>
    <property type="evidence" value="ECO:0000318"/>
    <property type="project" value="GO_Central"/>
</dbReference>
<dbReference type="GO" id="GO:0005886">
    <property type="term" value="C:plasma membrane"/>
    <property type="evidence" value="ECO:0000318"/>
    <property type="project" value="GO_Central"/>
</dbReference>
<dbReference type="GO" id="GO:0045211">
    <property type="term" value="C:postsynaptic membrane"/>
    <property type="evidence" value="ECO:0007669"/>
    <property type="project" value="UniProtKB-SubCell"/>
</dbReference>
<dbReference type="GO" id="GO:0045202">
    <property type="term" value="C:synapse"/>
    <property type="evidence" value="ECO:0000318"/>
    <property type="project" value="GO_Central"/>
</dbReference>
<dbReference type="GO" id="GO:0022848">
    <property type="term" value="F:acetylcholine-gated monoatomic cation-selective channel activity"/>
    <property type="evidence" value="ECO:0007669"/>
    <property type="project" value="InterPro"/>
</dbReference>
<dbReference type="GO" id="GO:0005231">
    <property type="term" value="F:excitatory extracellular ligand-gated monoatomic ion channel activity"/>
    <property type="evidence" value="ECO:0000318"/>
    <property type="project" value="GO_Central"/>
</dbReference>
<dbReference type="GO" id="GO:0004888">
    <property type="term" value="F:transmembrane signaling receptor activity"/>
    <property type="evidence" value="ECO:0007669"/>
    <property type="project" value="InterPro"/>
</dbReference>
<dbReference type="GO" id="GO:1904315">
    <property type="term" value="F:transmitter-gated monoatomic ion channel activity involved in regulation of postsynaptic membrane potential"/>
    <property type="evidence" value="ECO:0000318"/>
    <property type="project" value="GO_Central"/>
</dbReference>
<dbReference type="GO" id="GO:0007268">
    <property type="term" value="P:chemical synaptic transmission"/>
    <property type="evidence" value="ECO:0000318"/>
    <property type="project" value="GO_Central"/>
</dbReference>
<dbReference type="GO" id="GO:0098655">
    <property type="term" value="P:monoatomic cation transmembrane transport"/>
    <property type="evidence" value="ECO:0000314"/>
    <property type="project" value="FlyBase"/>
</dbReference>
<dbReference type="GO" id="GO:0034220">
    <property type="term" value="P:monoatomic ion transmembrane transport"/>
    <property type="evidence" value="ECO:0000318"/>
    <property type="project" value="GO_Central"/>
</dbReference>
<dbReference type="GO" id="GO:0042391">
    <property type="term" value="P:regulation of membrane potential"/>
    <property type="evidence" value="ECO:0000318"/>
    <property type="project" value="GO_Central"/>
</dbReference>
<dbReference type="GO" id="GO:0007271">
    <property type="term" value="P:synaptic transmission, cholinergic"/>
    <property type="evidence" value="ECO:0000270"/>
    <property type="project" value="FlyBase"/>
</dbReference>
<dbReference type="CDD" id="cd19031">
    <property type="entry name" value="LGIC_ECD_nAChR_proto_alpha-like"/>
    <property type="match status" value="1"/>
</dbReference>
<dbReference type="CDD" id="cd19064">
    <property type="entry name" value="LGIC_TM_nAChR"/>
    <property type="match status" value="1"/>
</dbReference>
<dbReference type="FunFam" id="2.70.170.10:FF:000013">
    <property type="entry name" value="Acetylcholine receptor subunit alpha"/>
    <property type="match status" value="1"/>
</dbReference>
<dbReference type="FunFam" id="1.20.58.390:FF:000030">
    <property type="entry name" value="Acetylcholine receptor subunit alpha-L1"/>
    <property type="match status" value="1"/>
</dbReference>
<dbReference type="FunFam" id="1.20.58.390:FF:000012">
    <property type="entry name" value="Acetylcholine receptor subunit alpha-like"/>
    <property type="match status" value="1"/>
</dbReference>
<dbReference type="Gene3D" id="2.70.170.10">
    <property type="entry name" value="Neurotransmitter-gated ion-channel ligand-binding domain"/>
    <property type="match status" value="1"/>
</dbReference>
<dbReference type="Gene3D" id="1.20.58.390">
    <property type="entry name" value="Neurotransmitter-gated ion-channel transmembrane domain"/>
    <property type="match status" value="2"/>
</dbReference>
<dbReference type="InterPro" id="IPR006202">
    <property type="entry name" value="Neur_chan_lig-bd"/>
</dbReference>
<dbReference type="InterPro" id="IPR036734">
    <property type="entry name" value="Neur_chan_lig-bd_sf"/>
</dbReference>
<dbReference type="InterPro" id="IPR006201">
    <property type="entry name" value="Neur_channel"/>
</dbReference>
<dbReference type="InterPro" id="IPR036719">
    <property type="entry name" value="Neuro-gated_channel_TM_sf"/>
</dbReference>
<dbReference type="InterPro" id="IPR038050">
    <property type="entry name" value="Neuro_actylchol_rec"/>
</dbReference>
<dbReference type="InterPro" id="IPR006029">
    <property type="entry name" value="Neurotrans-gated_channel_TM"/>
</dbReference>
<dbReference type="InterPro" id="IPR018000">
    <property type="entry name" value="Neurotransmitter_ion_chnl_CS"/>
</dbReference>
<dbReference type="InterPro" id="IPR002394">
    <property type="entry name" value="Nicotinic_acetylcholine_rcpt"/>
</dbReference>
<dbReference type="NCBIfam" id="TIGR00860">
    <property type="entry name" value="LIC"/>
    <property type="match status" value="1"/>
</dbReference>
<dbReference type="PANTHER" id="PTHR18945">
    <property type="entry name" value="NEUROTRANSMITTER GATED ION CHANNEL"/>
    <property type="match status" value="1"/>
</dbReference>
<dbReference type="Pfam" id="PF02931">
    <property type="entry name" value="Neur_chan_LBD"/>
    <property type="match status" value="1"/>
</dbReference>
<dbReference type="Pfam" id="PF02932">
    <property type="entry name" value="Neur_chan_memb"/>
    <property type="match status" value="1"/>
</dbReference>
<dbReference type="PRINTS" id="PR00254">
    <property type="entry name" value="NICOTINICR"/>
</dbReference>
<dbReference type="PRINTS" id="PR00252">
    <property type="entry name" value="NRIONCHANNEL"/>
</dbReference>
<dbReference type="SUPFAM" id="SSF90112">
    <property type="entry name" value="Neurotransmitter-gated ion-channel transmembrane pore"/>
    <property type="match status" value="1"/>
</dbReference>
<dbReference type="SUPFAM" id="SSF63712">
    <property type="entry name" value="Nicotinic receptor ligand binding domain-like"/>
    <property type="match status" value="1"/>
</dbReference>
<dbReference type="PROSITE" id="PS00236">
    <property type="entry name" value="NEUROTR_ION_CHANNEL"/>
    <property type="match status" value="1"/>
</dbReference>
<proteinExistence type="evidence at transcript level"/>
<feature type="signal peptide" evidence="5">
    <location>
        <begin position="1"/>
        <end position="21"/>
    </location>
</feature>
<feature type="chain" id="PRO_0000000300" description="Acetylcholine receptor subunit alpha-like 2">
    <location>
        <begin position="22"/>
        <end position="576"/>
    </location>
</feature>
<feature type="topological domain" description="Extracellular" evidence="2">
    <location>
        <begin position="22"/>
        <end position="261"/>
    </location>
</feature>
<feature type="transmembrane region" description="Helical" evidence="2">
    <location>
        <begin position="262"/>
        <end position="285"/>
    </location>
</feature>
<feature type="transmembrane region" description="Helical" evidence="2">
    <location>
        <begin position="293"/>
        <end position="311"/>
    </location>
</feature>
<feature type="transmembrane region" description="Helical" evidence="2">
    <location>
        <begin position="327"/>
        <end position="346"/>
    </location>
</feature>
<feature type="topological domain" description="Cytoplasmic" evidence="2">
    <location>
        <begin position="347"/>
        <end position="526"/>
    </location>
</feature>
<feature type="transmembrane region" description="Helical" evidence="2">
    <location>
        <begin position="527"/>
        <end position="545"/>
    </location>
</feature>
<feature type="glycosylation site" description="N-linked (GlcNAc...) asparagine" evidence="2">
    <location>
        <position position="65"/>
    </location>
</feature>
<feature type="glycosylation site" description="N-linked (GlcNAc...) asparagine" evidence="2">
    <location>
        <position position="254"/>
    </location>
</feature>
<feature type="glycosylation site" description="N-linked (GlcNAc...) asparagine" evidence="2">
    <location>
        <position position="570"/>
    </location>
</feature>
<feature type="disulfide bond" evidence="1">
    <location>
        <begin position="169"/>
        <end position="183"/>
    </location>
</feature>
<feature type="disulfide bond" description="Associated with receptor activation" evidence="1">
    <location>
        <begin position="243"/>
        <end position="244"/>
    </location>
</feature>
<accession>P17644</accession>
<accession>Q0KI18</accession>
<accession>Q9VC73</accession>
<gene>
    <name type="primary">nAChRalpha2</name>
    <name type="synonym">Acr96Ab</name>
    <name type="synonym">AcrE</name>
    <name type="synonym">nAcRalpha-96Ab</name>
    <name type="synonym">sad</name>
    <name type="ORF">CG6844</name>
</gene>
<name>ACH2_DROME</name>
<protein>
    <recommendedName>
        <fullName>Acetylcholine receptor subunit alpha-like 2</fullName>
    </recommendedName>
    <alternativeName>
        <fullName>Nicotinic acetylcholine receptor alpha 2</fullName>
    </alternativeName>
</protein>
<keyword id="KW-1003">Cell membrane</keyword>
<keyword id="KW-1015">Disulfide bond</keyword>
<keyword id="KW-0325">Glycoprotein</keyword>
<keyword id="KW-0407">Ion channel</keyword>
<keyword id="KW-0406">Ion transport</keyword>
<keyword id="KW-1071">Ligand-gated ion channel</keyword>
<keyword id="KW-0472">Membrane</keyword>
<keyword id="KW-0628">Postsynaptic cell membrane</keyword>
<keyword id="KW-0675">Receptor</keyword>
<keyword id="KW-1185">Reference proteome</keyword>
<keyword id="KW-0732">Signal</keyword>
<keyword id="KW-0770">Synapse</keyword>
<keyword id="KW-0812">Transmembrane</keyword>
<keyword id="KW-1133">Transmembrane helix</keyword>
<keyword id="KW-0813">Transport</keyword>
<organism>
    <name type="scientific">Drosophila melanogaster</name>
    <name type="common">Fruit fly</name>
    <dbReference type="NCBI Taxonomy" id="7227"/>
    <lineage>
        <taxon>Eukaryota</taxon>
        <taxon>Metazoa</taxon>
        <taxon>Ecdysozoa</taxon>
        <taxon>Arthropoda</taxon>
        <taxon>Hexapoda</taxon>
        <taxon>Insecta</taxon>
        <taxon>Pterygota</taxon>
        <taxon>Neoptera</taxon>
        <taxon>Endopterygota</taxon>
        <taxon>Diptera</taxon>
        <taxon>Brachycera</taxon>
        <taxon>Muscomorpha</taxon>
        <taxon>Ephydroidea</taxon>
        <taxon>Drosophilidae</taxon>
        <taxon>Drosophila</taxon>
        <taxon>Sophophora</taxon>
    </lineage>
</organism>
<comment type="function">
    <text evidence="1">After binding acetylcholine, the AChR responds by an extensive change in conformation that affects all subunits and leads to opening of an ion-conducting channel across the plasma membrane.</text>
</comment>
<comment type="subcellular location">
    <subcellularLocation>
        <location>Postsynaptic cell membrane</location>
        <topology>Multi-pass membrane protein</topology>
    </subcellularLocation>
    <subcellularLocation>
        <location evidence="1">Cell membrane</location>
        <topology evidence="1">Multi-pass membrane protein</topology>
    </subcellularLocation>
</comment>
<comment type="tissue specificity">
    <text evidence="3 4">CNS in embryos.</text>
</comment>
<comment type="developmental stage">
    <text evidence="3 4">Late embryonic and late pupal stages.</text>
</comment>
<comment type="similarity">
    <text evidence="5">Belongs to the ligand-gated ion channel (TC 1.A.9) family. Acetylcholine receptor (TC 1.A.9.1) subfamily.</text>
</comment>
<sequence>MAPGCCTTRPRPIALLAHIWRHCKPLCLLLVLLLLCETVQANPDAKRLYDDLLSNYNRLIRPVSNNTDTVLVKLGLRLSQLIDLNLKDQILTTNVWLEHEWQDHKFKWDPSEYGGVTELYVPSEHIWLPDIVLYNNADGEYVVTTMTKAILHYTGKVVWTPPAIFKSSCEIDVRYFPFDQQTCFMKFGSWTYDGDQIDLKHISQKNDKDNKVEIGIDLREYYPSVEWDILGVPAERHEKYYPCCAEPYPDIFFNITLRRKTLFYTVNLIIPCVGISYLSVLVFYLPADSGEKIALCISILLSQTMFFLLISEIIPSTSLALPLLGKYLLFTMLLVGLSVVITIIILNIHYRKPSTHKMRPWIRSFFIKRLPKLLLMRVPKDLLRDLAANKINYGLKFSKTKFGQALMDEMQMNSGGSSPDSLRRMQGRVGAGGCNGMHVTTATNRFSGLVGALGGGLSTLSGYNGLPSVLSGLDDSLSDVAARKKYPFELEKAIHNVMFIQHHMQRQDEFNAEDQDWGFVAMVMDRLFLWLFMIASLVGTFVILGEAPSLYDDTKAIDVQLSDVAKQIYNLTEKKN</sequence>
<reference key="1">
    <citation type="journal article" date="1990" name="FEBS Lett.">
        <title>Structure and developmental expression of the D alpha 2 gene encoding a novel nicotinic acetylcholine receptor protein of Drosophila melanogaster.</title>
        <authorList>
            <person name="Jonas P."/>
            <person name="Baumann A."/>
            <person name="Merz B."/>
            <person name="Gundelfinger E.D."/>
        </authorList>
    </citation>
    <scope>NUCLEOTIDE SEQUENCE [GENOMIC DNA]</scope>
    <scope>TISSUE SPECIFICITY</scope>
    <scope>DEVELOPMENTAL STAGE</scope>
    <source>
        <tissue>Head</tissue>
    </source>
</reference>
<reference key="2">
    <citation type="journal article" date="1990" name="EMBO J.">
        <title>Heterogeneity of Drosophila nicotinic acetylcholine receptors: SAD, a novel developmentally regulated alpha-subunit.</title>
        <authorList>
            <person name="Sawruk E."/>
            <person name="Schloss P."/>
            <person name="Betz H."/>
            <person name="Schmitt B."/>
        </authorList>
    </citation>
    <scope>NUCLEOTIDE SEQUENCE [MRNA]</scope>
</reference>
<reference key="3">
    <citation type="journal article" date="1990" name="Nucleic Acids Res.">
        <title>Sequence of D alpha 2, a novel alpha-like subunit of Drosophila nicotinic acetylcholine receptors.</title>
        <authorList>
            <person name="Baumann A."/>
            <person name="Jonas P."/>
            <person name="Gundelfinger E.D."/>
        </authorList>
    </citation>
    <scope>NUCLEOTIDE SEQUENCE [MRNA]</scope>
    <scope>TISSUE SPECIFICITY</scope>
    <scope>DEVELOPMENTAL STAGE</scope>
    <source>
        <tissue>Head</tissue>
    </source>
</reference>
<reference key="4">
    <citation type="journal article" date="2000" name="Science">
        <title>The genome sequence of Drosophila melanogaster.</title>
        <authorList>
            <person name="Adams M.D."/>
            <person name="Celniker S.E."/>
            <person name="Holt R.A."/>
            <person name="Evans C.A."/>
            <person name="Gocayne J.D."/>
            <person name="Amanatides P.G."/>
            <person name="Scherer S.E."/>
            <person name="Li P.W."/>
            <person name="Hoskins R.A."/>
            <person name="Galle R.F."/>
            <person name="George R.A."/>
            <person name="Lewis S.E."/>
            <person name="Richards S."/>
            <person name="Ashburner M."/>
            <person name="Henderson S.N."/>
            <person name="Sutton G.G."/>
            <person name="Wortman J.R."/>
            <person name="Yandell M.D."/>
            <person name="Zhang Q."/>
            <person name="Chen L.X."/>
            <person name="Brandon R.C."/>
            <person name="Rogers Y.-H.C."/>
            <person name="Blazej R.G."/>
            <person name="Champe M."/>
            <person name="Pfeiffer B.D."/>
            <person name="Wan K.H."/>
            <person name="Doyle C."/>
            <person name="Baxter E.G."/>
            <person name="Helt G."/>
            <person name="Nelson C.R."/>
            <person name="Miklos G.L.G."/>
            <person name="Abril J.F."/>
            <person name="Agbayani A."/>
            <person name="An H.-J."/>
            <person name="Andrews-Pfannkoch C."/>
            <person name="Baldwin D."/>
            <person name="Ballew R.M."/>
            <person name="Basu A."/>
            <person name="Baxendale J."/>
            <person name="Bayraktaroglu L."/>
            <person name="Beasley E.M."/>
            <person name="Beeson K.Y."/>
            <person name="Benos P.V."/>
            <person name="Berman B.P."/>
            <person name="Bhandari D."/>
            <person name="Bolshakov S."/>
            <person name="Borkova D."/>
            <person name="Botchan M.R."/>
            <person name="Bouck J."/>
            <person name="Brokstein P."/>
            <person name="Brottier P."/>
            <person name="Burtis K.C."/>
            <person name="Busam D.A."/>
            <person name="Butler H."/>
            <person name="Cadieu E."/>
            <person name="Center A."/>
            <person name="Chandra I."/>
            <person name="Cherry J.M."/>
            <person name="Cawley S."/>
            <person name="Dahlke C."/>
            <person name="Davenport L.B."/>
            <person name="Davies P."/>
            <person name="de Pablos B."/>
            <person name="Delcher A."/>
            <person name="Deng Z."/>
            <person name="Mays A.D."/>
            <person name="Dew I."/>
            <person name="Dietz S.M."/>
            <person name="Dodson K."/>
            <person name="Doup L.E."/>
            <person name="Downes M."/>
            <person name="Dugan-Rocha S."/>
            <person name="Dunkov B.C."/>
            <person name="Dunn P."/>
            <person name="Durbin K.J."/>
            <person name="Evangelista C.C."/>
            <person name="Ferraz C."/>
            <person name="Ferriera S."/>
            <person name="Fleischmann W."/>
            <person name="Fosler C."/>
            <person name="Gabrielian A.E."/>
            <person name="Garg N.S."/>
            <person name="Gelbart W.M."/>
            <person name="Glasser K."/>
            <person name="Glodek A."/>
            <person name="Gong F."/>
            <person name="Gorrell J.H."/>
            <person name="Gu Z."/>
            <person name="Guan P."/>
            <person name="Harris M."/>
            <person name="Harris N.L."/>
            <person name="Harvey D.A."/>
            <person name="Heiman T.J."/>
            <person name="Hernandez J.R."/>
            <person name="Houck J."/>
            <person name="Hostin D."/>
            <person name="Houston K.A."/>
            <person name="Howland T.J."/>
            <person name="Wei M.-H."/>
            <person name="Ibegwam C."/>
            <person name="Jalali M."/>
            <person name="Kalush F."/>
            <person name="Karpen G.H."/>
            <person name="Ke Z."/>
            <person name="Kennison J.A."/>
            <person name="Ketchum K.A."/>
            <person name="Kimmel B.E."/>
            <person name="Kodira C.D."/>
            <person name="Kraft C.L."/>
            <person name="Kravitz S."/>
            <person name="Kulp D."/>
            <person name="Lai Z."/>
            <person name="Lasko P."/>
            <person name="Lei Y."/>
            <person name="Levitsky A.A."/>
            <person name="Li J.H."/>
            <person name="Li Z."/>
            <person name="Liang Y."/>
            <person name="Lin X."/>
            <person name="Liu X."/>
            <person name="Mattei B."/>
            <person name="McIntosh T.C."/>
            <person name="McLeod M.P."/>
            <person name="McPherson D."/>
            <person name="Merkulov G."/>
            <person name="Milshina N.V."/>
            <person name="Mobarry C."/>
            <person name="Morris J."/>
            <person name="Moshrefi A."/>
            <person name="Mount S.M."/>
            <person name="Moy M."/>
            <person name="Murphy B."/>
            <person name="Murphy L."/>
            <person name="Muzny D.M."/>
            <person name="Nelson D.L."/>
            <person name="Nelson D.R."/>
            <person name="Nelson K.A."/>
            <person name="Nixon K."/>
            <person name="Nusskern D.R."/>
            <person name="Pacleb J.M."/>
            <person name="Palazzolo M."/>
            <person name="Pittman G.S."/>
            <person name="Pan S."/>
            <person name="Pollard J."/>
            <person name="Puri V."/>
            <person name="Reese M.G."/>
            <person name="Reinert K."/>
            <person name="Remington K."/>
            <person name="Saunders R.D.C."/>
            <person name="Scheeler F."/>
            <person name="Shen H."/>
            <person name="Shue B.C."/>
            <person name="Siden-Kiamos I."/>
            <person name="Simpson M."/>
            <person name="Skupski M.P."/>
            <person name="Smith T.J."/>
            <person name="Spier E."/>
            <person name="Spradling A.C."/>
            <person name="Stapleton M."/>
            <person name="Strong R."/>
            <person name="Sun E."/>
            <person name="Svirskas R."/>
            <person name="Tector C."/>
            <person name="Turner R."/>
            <person name="Venter E."/>
            <person name="Wang A.H."/>
            <person name="Wang X."/>
            <person name="Wang Z.-Y."/>
            <person name="Wassarman D.A."/>
            <person name="Weinstock G.M."/>
            <person name="Weissenbach J."/>
            <person name="Williams S.M."/>
            <person name="Woodage T."/>
            <person name="Worley K.C."/>
            <person name="Wu D."/>
            <person name="Yang S."/>
            <person name="Yao Q.A."/>
            <person name="Ye J."/>
            <person name="Yeh R.-F."/>
            <person name="Zaveri J.S."/>
            <person name="Zhan M."/>
            <person name="Zhang G."/>
            <person name="Zhao Q."/>
            <person name="Zheng L."/>
            <person name="Zheng X.H."/>
            <person name="Zhong F.N."/>
            <person name="Zhong W."/>
            <person name="Zhou X."/>
            <person name="Zhu S.C."/>
            <person name="Zhu X."/>
            <person name="Smith H.O."/>
            <person name="Gibbs R.A."/>
            <person name="Myers E.W."/>
            <person name="Rubin G.M."/>
            <person name="Venter J.C."/>
        </authorList>
    </citation>
    <scope>NUCLEOTIDE SEQUENCE [LARGE SCALE GENOMIC DNA]</scope>
    <source>
        <strain>Berkeley</strain>
    </source>
</reference>
<reference key="5">
    <citation type="journal article" date="2002" name="Genome Biol.">
        <title>Annotation of the Drosophila melanogaster euchromatic genome: a systematic review.</title>
        <authorList>
            <person name="Misra S."/>
            <person name="Crosby M.A."/>
            <person name="Mungall C.J."/>
            <person name="Matthews B.B."/>
            <person name="Campbell K.S."/>
            <person name="Hradecky P."/>
            <person name="Huang Y."/>
            <person name="Kaminker J.S."/>
            <person name="Millburn G.H."/>
            <person name="Prochnik S.E."/>
            <person name="Smith C.D."/>
            <person name="Tupy J.L."/>
            <person name="Whitfield E.J."/>
            <person name="Bayraktaroglu L."/>
            <person name="Berman B.P."/>
            <person name="Bettencourt B.R."/>
            <person name="Celniker S.E."/>
            <person name="de Grey A.D.N.J."/>
            <person name="Drysdale R.A."/>
            <person name="Harris N.L."/>
            <person name="Richter J."/>
            <person name="Russo S."/>
            <person name="Schroeder A.J."/>
            <person name="Shu S.Q."/>
            <person name="Stapleton M."/>
            <person name="Yamada C."/>
            <person name="Ashburner M."/>
            <person name="Gelbart W.M."/>
            <person name="Rubin G.M."/>
            <person name="Lewis S.E."/>
        </authorList>
    </citation>
    <scope>GENOME REANNOTATION</scope>
    <source>
        <strain>Berkeley</strain>
    </source>
</reference>
<reference key="6">
    <citation type="journal article" date="2002" name="Genome Biol.">
        <title>A Drosophila full-length cDNA resource.</title>
        <authorList>
            <person name="Stapleton M."/>
            <person name="Carlson J.W."/>
            <person name="Brokstein P."/>
            <person name="Yu C."/>
            <person name="Champe M."/>
            <person name="George R.A."/>
            <person name="Guarin H."/>
            <person name="Kronmiller B."/>
            <person name="Pacleb J.M."/>
            <person name="Park S."/>
            <person name="Wan K.H."/>
            <person name="Rubin G.M."/>
            <person name="Celniker S.E."/>
        </authorList>
    </citation>
    <scope>NUCLEOTIDE SEQUENCE [LARGE SCALE MRNA]</scope>
    <source>
        <strain>Berkeley</strain>
        <tissue>Head</tissue>
    </source>
</reference>